<protein>
    <recommendedName>
        <fullName>Paternally-expressed gene 3 protein</fullName>
    </recommendedName>
</protein>
<keyword id="KW-0053">Apoptosis</keyword>
<keyword id="KW-0963">Cytoplasm</keyword>
<keyword id="KW-0479">Metal-binding</keyword>
<keyword id="KW-0539">Nucleus</keyword>
<keyword id="KW-1185">Reference proteome</keyword>
<keyword id="KW-0677">Repeat</keyword>
<keyword id="KW-0862">Zinc</keyword>
<keyword id="KW-0863">Zinc-finger</keyword>
<proteinExistence type="inferred from homology"/>
<feature type="chain" id="PRO_0000285533" description="Paternally-expressed gene 3 protein">
    <location>
        <begin position="1"/>
        <end position="1588"/>
    </location>
</feature>
<feature type="domain" description="SCAN box" evidence="3">
    <location>
        <begin position="46"/>
        <end position="128"/>
    </location>
</feature>
<feature type="repeat" description="2-1">
    <location>
        <begin position="1397"/>
        <end position="1403"/>
    </location>
</feature>
<feature type="repeat" description="2-2">
    <location>
        <begin position="1404"/>
        <end position="1410"/>
    </location>
</feature>
<feature type="repeat" description="2-3">
    <location>
        <begin position="1411"/>
        <end position="1417"/>
    </location>
</feature>
<feature type="repeat" description="1-1">
    <location>
        <begin position="1418"/>
        <end position="1422"/>
    </location>
</feature>
<feature type="repeat" description="1-2">
    <location>
        <begin position="1425"/>
        <end position="1429"/>
    </location>
</feature>
<feature type="repeat" description="1-3">
    <location>
        <begin position="1432"/>
        <end position="1436"/>
    </location>
</feature>
<feature type="repeat" description="1-4">
    <location>
        <begin position="1439"/>
        <end position="1443"/>
    </location>
</feature>
<feature type="zinc finger region" description="C2H2-type 1" evidence="2">
    <location>
        <begin position="454"/>
        <end position="476"/>
    </location>
</feature>
<feature type="zinc finger region" description="C2H2-type 2" evidence="2">
    <location>
        <begin position="507"/>
        <end position="529"/>
    </location>
</feature>
<feature type="zinc finger region" description="C2H2-type 3" evidence="2">
    <location>
        <begin position="565"/>
        <end position="587"/>
    </location>
</feature>
<feature type="zinc finger region" description="C2H2-type 4" evidence="2">
    <location>
        <begin position="627"/>
        <end position="649"/>
    </location>
</feature>
<feature type="zinc finger region" description="C2H2-type 5" evidence="2">
    <location>
        <begin position="969"/>
        <end position="991"/>
    </location>
</feature>
<feature type="zinc finger region" description="C2H2-type 6" evidence="2">
    <location>
        <begin position="1107"/>
        <end position="1129"/>
    </location>
</feature>
<feature type="zinc finger region" description="C2H2-type 7" evidence="2">
    <location>
        <begin position="1163"/>
        <end position="1185"/>
    </location>
</feature>
<feature type="zinc finger region" description="C2H2-type 8" evidence="2">
    <location>
        <begin position="1225"/>
        <end position="1247"/>
    </location>
</feature>
<feature type="zinc finger region" description="C2H2-type 9" evidence="2">
    <location>
        <begin position="1282"/>
        <end position="1304"/>
    </location>
</feature>
<feature type="zinc finger region" description="C2H2-type 10" evidence="2">
    <location>
        <begin position="1332"/>
        <end position="1354"/>
    </location>
</feature>
<feature type="zinc finger region" description="C2H2-type 11" evidence="2">
    <location>
        <begin position="1505"/>
        <end position="1527"/>
    </location>
</feature>
<feature type="zinc finger region" description="C2H2-type 12" evidence="2">
    <location>
        <begin position="1564"/>
        <end position="1586"/>
    </location>
</feature>
<feature type="region of interest" description="Disordered" evidence="4">
    <location>
        <begin position="128"/>
        <end position="230"/>
    </location>
</feature>
<feature type="region of interest" description="Disordered" evidence="4">
    <location>
        <begin position="266"/>
        <end position="306"/>
    </location>
</feature>
<feature type="region of interest" description="Disordered" evidence="4">
    <location>
        <begin position="319"/>
        <end position="349"/>
    </location>
</feature>
<feature type="region of interest" description="Disordered" evidence="4">
    <location>
        <begin position="588"/>
        <end position="610"/>
    </location>
</feature>
<feature type="region of interest" description="Disordered" evidence="4">
    <location>
        <begin position="838"/>
        <end position="930"/>
    </location>
</feature>
<feature type="region of interest" description="Disordered" evidence="4">
    <location>
        <begin position="1056"/>
        <end position="1104"/>
    </location>
</feature>
<feature type="region of interest" description="Disordered" evidence="4">
    <location>
        <begin position="1393"/>
        <end position="1495"/>
    </location>
</feature>
<feature type="region of interest" description="3 X 7 AA repeat of P-E-V-E-A-A-E">
    <location>
        <begin position="1397"/>
        <end position="1417"/>
    </location>
</feature>
<feature type="region of interest" description="4 X 5 AA repeat of P-X-G-E-A">
    <location>
        <begin position="1418"/>
        <end position="1443"/>
    </location>
</feature>
<feature type="compositionally biased region" description="Acidic residues" evidence="4">
    <location>
        <begin position="129"/>
        <end position="142"/>
    </location>
</feature>
<feature type="compositionally biased region" description="Basic and acidic residues" evidence="4">
    <location>
        <begin position="143"/>
        <end position="152"/>
    </location>
</feature>
<feature type="compositionally biased region" description="Basic and acidic residues" evidence="4">
    <location>
        <begin position="161"/>
        <end position="182"/>
    </location>
</feature>
<feature type="compositionally biased region" description="Basic and acidic residues" evidence="4">
    <location>
        <begin position="206"/>
        <end position="225"/>
    </location>
</feature>
<feature type="compositionally biased region" description="Basic and acidic residues" evidence="4">
    <location>
        <begin position="295"/>
        <end position="306"/>
    </location>
</feature>
<feature type="compositionally biased region" description="Basic and acidic residues" evidence="4">
    <location>
        <begin position="588"/>
        <end position="607"/>
    </location>
</feature>
<feature type="compositionally biased region" description="Basic and acidic residues" evidence="4">
    <location>
        <begin position="868"/>
        <end position="881"/>
    </location>
</feature>
<feature type="compositionally biased region" description="Basic and acidic residues" evidence="4">
    <location>
        <begin position="1071"/>
        <end position="1082"/>
    </location>
</feature>
<feature type="compositionally biased region" description="Acidic residues" evidence="4">
    <location>
        <begin position="1395"/>
        <end position="1415"/>
    </location>
</feature>
<feature type="compositionally biased region" description="Acidic residues" evidence="4">
    <location>
        <begin position="1449"/>
        <end position="1466"/>
    </location>
</feature>
<feature type="compositionally biased region" description="Acidic residues" evidence="4">
    <location>
        <begin position="1475"/>
        <end position="1495"/>
    </location>
</feature>
<name>PEG3_PANPA</name>
<comment type="function">
    <text evidence="1">Induces apoptosis in cooperation with SIAH1A. Acts as a mediator between p53/TP53 and BAX in a neuronal death pathway that is activated by DNA damage. Acts synergistically with TRAF2 and inhibits TNF induced apoptosis through activation of NF-kappa-B (By similarity).</text>
</comment>
<comment type="subunit">
    <text evidence="1">Homodimer. Interacts with SIAH1A and SIAH2. Interacts with TRAF2 (By similarity).</text>
</comment>
<comment type="subcellular location">
    <subcellularLocation>
        <location evidence="3">Nucleus</location>
    </subcellularLocation>
    <subcellularLocation>
        <location evidence="1">Cytoplasm</location>
    </subcellularLocation>
</comment>
<comment type="domain">
    <text evidence="1">The SCAN domain enables PEG3 homo- or heterodimerization to control gene expression in a combinatorial fashion.</text>
</comment>
<comment type="similarity">
    <text evidence="5">Belongs to the krueppel C2H2-type zinc-finger protein family.</text>
</comment>
<gene>
    <name type="primary">PEG3</name>
</gene>
<accession>A1YGK6</accession>
<dbReference type="EMBL" id="DQ977295">
    <property type="protein sequence ID" value="ABM54431.1"/>
    <property type="molecule type" value="Genomic_DNA"/>
</dbReference>
<dbReference type="STRING" id="9597.ENSPPAP00000005962"/>
<dbReference type="eggNOG" id="KOG1721">
    <property type="taxonomic scope" value="Eukaryota"/>
</dbReference>
<dbReference type="Proteomes" id="UP000240080">
    <property type="component" value="Unplaced"/>
</dbReference>
<dbReference type="GO" id="GO:0005737">
    <property type="term" value="C:cytoplasm"/>
    <property type="evidence" value="ECO:0007669"/>
    <property type="project" value="UniProtKB-SubCell"/>
</dbReference>
<dbReference type="GO" id="GO:0005634">
    <property type="term" value="C:nucleus"/>
    <property type="evidence" value="ECO:0007669"/>
    <property type="project" value="UniProtKB-SubCell"/>
</dbReference>
<dbReference type="GO" id="GO:0008270">
    <property type="term" value="F:zinc ion binding"/>
    <property type="evidence" value="ECO:0007669"/>
    <property type="project" value="UniProtKB-KW"/>
</dbReference>
<dbReference type="GO" id="GO:0006915">
    <property type="term" value="P:apoptotic process"/>
    <property type="evidence" value="ECO:0007669"/>
    <property type="project" value="UniProtKB-KW"/>
</dbReference>
<dbReference type="CDD" id="cd07936">
    <property type="entry name" value="SCAN"/>
    <property type="match status" value="1"/>
</dbReference>
<dbReference type="FunFam" id="3.30.160.60:FF:002668">
    <property type="entry name" value="Paternally expressed 3"/>
    <property type="match status" value="1"/>
</dbReference>
<dbReference type="FunFam" id="3.30.160.60:FF:001889">
    <property type="entry name" value="Paternally-expressed gene 3 protein"/>
    <property type="match status" value="1"/>
</dbReference>
<dbReference type="FunFam" id="3.30.160.60:FF:002011">
    <property type="entry name" value="Paternally-expressed gene 3 protein"/>
    <property type="match status" value="1"/>
</dbReference>
<dbReference type="FunFam" id="3.30.160.60:FF:002100">
    <property type="entry name" value="Paternally-expressed gene 3 protein"/>
    <property type="match status" value="1"/>
</dbReference>
<dbReference type="FunFam" id="3.30.160.60:FF:003286">
    <property type="entry name" value="Paternally-expressed gene 3 protein"/>
    <property type="match status" value="1"/>
</dbReference>
<dbReference type="FunFam" id="3.30.160.60:FF:001328">
    <property type="entry name" value="paternally-expressed gene 3 protein"/>
    <property type="match status" value="2"/>
</dbReference>
<dbReference type="FunFam" id="3.30.160.60:FF:001757">
    <property type="entry name" value="paternally-expressed gene 3 protein isoform X1"/>
    <property type="match status" value="1"/>
</dbReference>
<dbReference type="FunFam" id="3.30.160.60:FF:000661">
    <property type="entry name" value="paternally-expressed gene 3 protein-like"/>
    <property type="match status" value="1"/>
</dbReference>
<dbReference type="FunFam" id="1.10.4020.10:FF:000001">
    <property type="entry name" value="zinc finger protein 263 isoform X1"/>
    <property type="match status" value="1"/>
</dbReference>
<dbReference type="Gene3D" id="3.30.160.60">
    <property type="entry name" value="Classic Zinc Finger"/>
    <property type="match status" value="9"/>
</dbReference>
<dbReference type="Gene3D" id="1.10.4020.10">
    <property type="entry name" value="DNA breaking-rejoining enzymes"/>
    <property type="match status" value="1"/>
</dbReference>
<dbReference type="InterPro" id="IPR050826">
    <property type="entry name" value="Krueppel_C2H2_ZnFinger"/>
</dbReference>
<dbReference type="InterPro" id="IPR003309">
    <property type="entry name" value="SCAN_dom"/>
</dbReference>
<dbReference type="InterPro" id="IPR038269">
    <property type="entry name" value="SCAN_sf"/>
</dbReference>
<dbReference type="InterPro" id="IPR036236">
    <property type="entry name" value="Znf_C2H2_sf"/>
</dbReference>
<dbReference type="InterPro" id="IPR013087">
    <property type="entry name" value="Znf_C2H2_type"/>
</dbReference>
<dbReference type="PANTHER" id="PTHR24377">
    <property type="entry name" value="IP01015P-RELATED"/>
    <property type="match status" value="1"/>
</dbReference>
<dbReference type="Pfam" id="PF02023">
    <property type="entry name" value="SCAN"/>
    <property type="match status" value="1"/>
</dbReference>
<dbReference type="Pfam" id="PF00096">
    <property type="entry name" value="zf-C2H2"/>
    <property type="match status" value="10"/>
</dbReference>
<dbReference type="Pfam" id="PF13912">
    <property type="entry name" value="zf-C2H2_6"/>
    <property type="match status" value="1"/>
</dbReference>
<dbReference type="SMART" id="SM00431">
    <property type="entry name" value="SCAN"/>
    <property type="match status" value="1"/>
</dbReference>
<dbReference type="SMART" id="SM00355">
    <property type="entry name" value="ZnF_C2H2"/>
    <property type="match status" value="12"/>
</dbReference>
<dbReference type="SUPFAM" id="SSF57667">
    <property type="entry name" value="beta-beta-alpha zinc fingers"/>
    <property type="match status" value="9"/>
</dbReference>
<dbReference type="SUPFAM" id="SSF47353">
    <property type="entry name" value="Retrovirus capsid dimerization domain-like"/>
    <property type="match status" value="1"/>
</dbReference>
<dbReference type="PROSITE" id="PS50804">
    <property type="entry name" value="SCAN_BOX"/>
    <property type="match status" value="1"/>
</dbReference>
<dbReference type="PROSITE" id="PS00028">
    <property type="entry name" value="ZINC_FINGER_C2H2_1"/>
    <property type="match status" value="12"/>
</dbReference>
<dbReference type="PROSITE" id="PS50157">
    <property type="entry name" value="ZINC_FINGER_C2H2_2"/>
    <property type="match status" value="12"/>
</dbReference>
<reference key="1">
    <citation type="submission" date="2006-08" db="EMBL/GenBank/DDBJ databases">
        <title>Positive selection in transcription factor genes on the human lineage.</title>
        <authorList>
            <person name="Nickel G.C."/>
            <person name="Tefft D.L."/>
            <person name="Trevarthen K."/>
            <person name="Funt J."/>
            <person name="Adams M.D."/>
        </authorList>
    </citation>
    <scope>NUCLEOTIDE SEQUENCE [GENOMIC DNA]</scope>
</reference>
<sequence>MLPPKHLSATKPKKSWAPNLYELDSDLTKEPDVIIGEGPTDSEFFHQRFRNLIYVEFVGPRKTLIKLRNLCLDWLQPETHTKEEIIELLVLEQYLTIIPEKLKPWVRAKKPENCEKLVTLLENYKEMYQPEDDNNSDVTSDDDMTRNRRESSPPHSVHSFSGDRDWDRRGRSRDMEPRDRWSHTRNPRSRMPQRDLSLPVVAKTSFEMDRDDDRDSRAYESRSQDAESYQNVVDLAEDRKPHNTIQDNMENYRKLLSLGVQLAEDDGHSHMTQGHSSRSKRSAYPSTSRGLKTMPEAKKSTHRRGICEDESSHGVIMEKFIKDVSRSSKSGRARESSDRSQRFPRMSDDNWKDISLNKRESVIQQRVYEGNAFRGGFRFNSTLVSRKRVLERKRRYHFDTDGKGSIHDQKACPRKKPFECGSEMRKAMSMSSLSSLSSPSFTESQPIDFGAMPYVCDECGRSFSVISEFVEHQIMHTRENLYEYGESFIHSVAVSEVQKSQVGGKRFECKDCGETFNKSAALAEHRKIHARGYLVECKNQECEEAFMPSPTFSELQKIYGKDKFYECRVCKETFLHSSALIEHQKIHFGDDKDNEREHERERERGETFRPSPALNEFQKMYGKEKMYECKVCGETFLHSSSLKEHQKIHTRGNPFENKGKVCEETFIPGQSLKKRQKTYNKEKLYDFTDGRDAFMQSSELSEHQKIHSRKNLFEGRGYEKSVIHSGPFTESQKSHTITRPLESDEDEKAFTISSNPYENQKIPTKENVYEAKSYERSVIHSLASVEAQKSHSVAGPSKPKVMAESTIQSFDAINHQRVRAGGNTSEGREYSRSVIHSLVASKPPRSHNGNELVESNEKGESSIYISDLNDKRQKIPARENPCEGGSKNRNYEDSVIQSVSRAKPQKSVPGEGSGEFKKDGEFSVPSSNVREYQKARAKKKYIEHRSNETSVIHSLPFGEQTFRPRGMLYECQECGECFAHSSDLTEHQKIHDREKPSGSRNYEWSVIRSLAPTDPQTSYAQEQYAKEQAWNKCKEFRQFFATSEDLNTNQKIYDQEKSHGEESQGENTDGEETHSEETHGQETIEDPVIQGSDMEDPQKDDPDDKIYECEDCGLGFVDLTDLTDHQKVHSRKCLVDSREYTHSVIHTHSISEYQRDYTGEQLYECPKCGESFIHSSFLFEHQRIHEQDQLYSMKGCDDGFIALLPMKPRRNRAAERNPALAGSAIRCLLCGQGFIHSSALNEHMRLHREDDLLEQSQMAEEAIIPGLALTEFQRSQTEERLFECAVCGESFINPAELADHVTVHKNEPYVYGSSYTHTSFLTEPLKGAIPFYECKDCGKSFIHSTVLTKHKELHLEEEEEDEAAAAAAAAAQEVEANVHVPQVVLRIQGSNVEAAEPEVEAXEPEVEAAEPEVEAAEPNGEAEGPDGEAAEPIGEAGQPNGEAEQPNGDADEPDGAGIEDPEERAEEPEGKAEEPEGDADEPDGVGIEDPEEGEDQEIQVEEPYYDCHECTETFTSSTAFGEHLKTHASMIIFEPANAFGECSGYIERASTSTGGANQADEKYFKCDVCGQLFNDRLSLARHQNTHTG</sequence>
<evidence type="ECO:0000250" key="1"/>
<evidence type="ECO:0000255" key="2">
    <source>
        <dbReference type="PROSITE-ProRule" id="PRU00042"/>
    </source>
</evidence>
<evidence type="ECO:0000255" key="3">
    <source>
        <dbReference type="PROSITE-ProRule" id="PRU00187"/>
    </source>
</evidence>
<evidence type="ECO:0000256" key="4">
    <source>
        <dbReference type="SAM" id="MobiDB-lite"/>
    </source>
</evidence>
<evidence type="ECO:0000305" key="5"/>
<organism>
    <name type="scientific">Pan paniscus</name>
    <name type="common">Pygmy chimpanzee</name>
    <name type="synonym">Bonobo</name>
    <dbReference type="NCBI Taxonomy" id="9597"/>
    <lineage>
        <taxon>Eukaryota</taxon>
        <taxon>Metazoa</taxon>
        <taxon>Chordata</taxon>
        <taxon>Craniata</taxon>
        <taxon>Vertebrata</taxon>
        <taxon>Euteleostomi</taxon>
        <taxon>Mammalia</taxon>
        <taxon>Eutheria</taxon>
        <taxon>Euarchontoglires</taxon>
        <taxon>Primates</taxon>
        <taxon>Haplorrhini</taxon>
        <taxon>Catarrhini</taxon>
        <taxon>Hominidae</taxon>
        <taxon>Pan</taxon>
    </lineage>
</organism>